<name>Y1507_LACJO</name>
<keyword id="KW-0963">Cytoplasm</keyword>
<reference key="1">
    <citation type="journal article" date="2004" name="Proc. Natl. Acad. Sci. U.S.A.">
        <title>The genome sequence of the probiotic intestinal bacterium Lactobacillus johnsonii NCC 533.</title>
        <authorList>
            <person name="Pridmore R.D."/>
            <person name="Berger B."/>
            <person name="Desiere F."/>
            <person name="Vilanova D."/>
            <person name="Barretto C."/>
            <person name="Pittet A.-C."/>
            <person name="Zwahlen M.-C."/>
            <person name="Rouvet M."/>
            <person name="Altermann E."/>
            <person name="Barrangou R."/>
            <person name="Mollet B."/>
            <person name="Mercenier A."/>
            <person name="Klaenhammer T."/>
            <person name="Arigoni F."/>
            <person name="Schell M.A."/>
        </authorList>
    </citation>
    <scope>NUCLEOTIDE SEQUENCE [LARGE SCALE GENOMIC DNA]</scope>
    <source>
        <strain>CNCM I-1225 / La1 / NCC 533</strain>
    </source>
</reference>
<gene>
    <name type="ordered locus">LJ_1507</name>
</gene>
<dbReference type="EMBL" id="AE017198">
    <property type="protein sequence ID" value="AAS09275.1"/>
    <property type="molecule type" value="Genomic_DNA"/>
</dbReference>
<dbReference type="RefSeq" id="WP_011162244.1">
    <property type="nucleotide sequence ID" value="NC_005362.1"/>
</dbReference>
<dbReference type="SMR" id="P61463"/>
<dbReference type="KEGG" id="ljo:LJ_1507"/>
<dbReference type="PATRIC" id="fig|257314.6.peg.1325"/>
<dbReference type="eggNOG" id="COG4224">
    <property type="taxonomic scope" value="Bacteria"/>
</dbReference>
<dbReference type="HOGENOM" id="CLU_173137_0_1_9"/>
<dbReference type="Proteomes" id="UP000000581">
    <property type="component" value="Chromosome"/>
</dbReference>
<dbReference type="GO" id="GO:0005737">
    <property type="term" value="C:cytoplasm"/>
    <property type="evidence" value="ECO:0007669"/>
    <property type="project" value="UniProtKB-SubCell"/>
</dbReference>
<dbReference type="Gene3D" id="1.10.287.540">
    <property type="entry name" value="Helix hairpin bin"/>
    <property type="match status" value="1"/>
</dbReference>
<dbReference type="HAMAP" id="MF_01103">
    <property type="entry name" value="UPF0291"/>
    <property type="match status" value="1"/>
</dbReference>
<dbReference type="InterPro" id="IPR009242">
    <property type="entry name" value="DUF896"/>
</dbReference>
<dbReference type="PANTHER" id="PTHR37300">
    <property type="entry name" value="UPF0291 PROTEIN CBO2609/CLC_2481"/>
    <property type="match status" value="1"/>
</dbReference>
<dbReference type="PANTHER" id="PTHR37300:SF1">
    <property type="entry name" value="UPF0291 PROTEIN YNZC"/>
    <property type="match status" value="1"/>
</dbReference>
<dbReference type="Pfam" id="PF05979">
    <property type="entry name" value="DUF896"/>
    <property type="match status" value="1"/>
</dbReference>
<dbReference type="SUPFAM" id="SSF158221">
    <property type="entry name" value="YnzC-like"/>
    <property type="match status" value="1"/>
</dbReference>
<feature type="chain" id="PRO_0000094973" description="UPF0291 protein LJ_1507">
    <location>
        <begin position="1"/>
        <end position="82"/>
    </location>
</feature>
<feature type="region of interest" description="Disordered" evidence="2">
    <location>
        <begin position="61"/>
        <end position="82"/>
    </location>
</feature>
<protein>
    <recommendedName>
        <fullName evidence="1">UPF0291 protein LJ_1507</fullName>
    </recommendedName>
</protein>
<proteinExistence type="inferred from homology"/>
<evidence type="ECO:0000255" key="1">
    <source>
        <dbReference type="HAMAP-Rule" id="MF_01103"/>
    </source>
</evidence>
<evidence type="ECO:0000256" key="2">
    <source>
        <dbReference type="SAM" id="MobiDB-lite"/>
    </source>
</evidence>
<sequence>MDKKEEENLIKRINELTKISRERELTPDELEERKKLRSAFLENFRAGFRQQLEDTVVIDKDGKEVTSEKAKEAQRRKGLRKD</sequence>
<accession>P61463</accession>
<organism>
    <name type="scientific">Lactobacillus johnsonii (strain CNCM I-12250 / La1 / NCC 533)</name>
    <dbReference type="NCBI Taxonomy" id="257314"/>
    <lineage>
        <taxon>Bacteria</taxon>
        <taxon>Bacillati</taxon>
        <taxon>Bacillota</taxon>
        <taxon>Bacilli</taxon>
        <taxon>Lactobacillales</taxon>
        <taxon>Lactobacillaceae</taxon>
        <taxon>Lactobacillus</taxon>
    </lineage>
</organism>
<comment type="subcellular location">
    <subcellularLocation>
        <location evidence="1">Cytoplasm</location>
    </subcellularLocation>
</comment>
<comment type="similarity">
    <text evidence="1">Belongs to the UPF0291 family.</text>
</comment>